<comment type="function">
    <text evidence="1">Catalyzes the attachment of L-aspartate to tRNA(Asp) in a two-step reaction: L-aspartate is first activated by ATP to form Asp-AMP and then transferred to the acceptor end of tRNA(Asp).</text>
</comment>
<comment type="catalytic activity">
    <reaction evidence="1">
        <text>tRNA(Asp) + L-aspartate + ATP = L-aspartyl-tRNA(Asp) + AMP + diphosphate</text>
        <dbReference type="Rhea" id="RHEA:19649"/>
        <dbReference type="Rhea" id="RHEA-COMP:9660"/>
        <dbReference type="Rhea" id="RHEA-COMP:9678"/>
        <dbReference type="ChEBI" id="CHEBI:29991"/>
        <dbReference type="ChEBI" id="CHEBI:30616"/>
        <dbReference type="ChEBI" id="CHEBI:33019"/>
        <dbReference type="ChEBI" id="CHEBI:78442"/>
        <dbReference type="ChEBI" id="CHEBI:78516"/>
        <dbReference type="ChEBI" id="CHEBI:456215"/>
        <dbReference type="EC" id="6.1.1.12"/>
    </reaction>
</comment>
<comment type="subunit">
    <text evidence="1">Homodimer.</text>
</comment>
<comment type="subcellular location">
    <subcellularLocation>
        <location evidence="1">Cytoplasm</location>
    </subcellularLocation>
</comment>
<comment type="similarity">
    <text evidence="1">Belongs to the class-II aminoacyl-tRNA synthetase family. Type 1 subfamily.</text>
</comment>
<evidence type="ECO:0000255" key="1">
    <source>
        <dbReference type="HAMAP-Rule" id="MF_00044"/>
    </source>
</evidence>
<dbReference type="EC" id="6.1.1.12" evidence="1"/>
<dbReference type="EMBL" id="CP000939">
    <property type="protein sequence ID" value="ACA45585.1"/>
    <property type="molecule type" value="Genomic_DNA"/>
</dbReference>
<dbReference type="RefSeq" id="WP_003403591.1">
    <property type="nucleotide sequence ID" value="NC_010516.1"/>
</dbReference>
<dbReference type="SMR" id="B1IMD7"/>
<dbReference type="KEGG" id="cbb:CLD_1486"/>
<dbReference type="HOGENOM" id="CLU_014330_3_2_9"/>
<dbReference type="Proteomes" id="UP000008541">
    <property type="component" value="Chromosome"/>
</dbReference>
<dbReference type="GO" id="GO:0005737">
    <property type="term" value="C:cytoplasm"/>
    <property type="evidence" value="ECO:0007669"/>
    <property type="project" value="UniProtKB-SubCell"/>
</dbReference>
<dbReference type="GO" id="GO:0004815">
    <property type="term" value="F:aspartate-tRNA ligase activity"/>
    <property type="evidence" value="ECO:0007669"/>
    <property type="project" value="UniProtKB-UniRule"/>
</dbReference>
<dbReference type="GO" id="GO:0005524">
    <property type="term" value="F:ATP binding"/>
    <property type="evidence" value="ECO:0007669"/>
    <property type="project" value="UniProtKB-UniRule"/>
</dbReference>
<dbReference type="GO" id="GO:0140096">
    <property type="term" value="F:catalytic activity, acting on a protein"/>
    <property type="evidence" value="ECO:0007669"/>
    <property type="project" value="UniProtKB-ARBA"/>
</dbReference>
<dbReference type="GO" id="GO:0003676">
    <property type="term" value="F:nucleic acid binding"/>
    <property type="evidence" value="ECO:0007669"/>
    <property type="project" value="InterPro"/>
</dbReference>
<dbReference type="GO" id="GO:0016740">
    <property type="term" value="F:transferase activity"/>
    <property type="evidence" value="ECO:0007669"/>
    <property type="project" value="UniProtKB-ARBA"/>
</dbReference>
<dbReference type="GO" id="GO:0006422">
    <property type="term" value="P:aspartyl-tRNA aminoacylation"/>
    <property type="evidence" value="ECO:0007669"/>
    <property type="project" value="UniProtKB-UniRule"/>
</dbReference>
<dbReference type="CDD" id="cd00777">
    <property type="entry name" value="AspRS_core"/>
    <property type="match status" value="1"/>
</dbReference>
<dbReference type="CDD" id="cd04317">
    <property type="entry name" value="EcAspRS_like_N"/>
    <property type="match status" value="1"/>
</dbReference>
<dbReference type="Gene3D" id="3.30.930.10">
    <property type="entry name" value="Bira Bifunctional Protein, Domain 2"/>
    <property type="match status" value="1"/>
</dbReference>
<dbReference type="Gene3D" id="3.30.1360.30">
    <property type="entry name" value="GAD-like domain"/>
    <property type="match status" value="1"/>
</dbReference>
<dbReference type="Gene3D" id="2.40.50.140">
    <property type="entry name" value="Nucleic acid-binding proteins"/>
    <property type="match status" value="1"/>
</dbReference>
<dbReference type="HAMAP" id="MF_00044">
    <property type="entry name" value="Asp_tRNA_synth_type1"/>
    <property type="match status" value="1"/>
</dbReference>
<dbReference type="InterPro" id="IPR004364">
    <property type="entry name" value="Aa-tRNA-synt_II"/>
</dbReference>
<dbReference type="InterPro" id="IPR006195">
    <property type="entry name" value="aa-tRNA-synth_II"/>
</dbReference>
<dbReference type="InterPro" id="IPR045864">
    <property type="entry name" value="aa-tRNA-synth_II/BPL/LPL"/>
</dbReference>
<dbReference type="InterPro" id="IPR004524">
    <property type="entry name" value="Asp-tRNA-ligase_1"/>
</dbReference>
<dbReference type="InterPro" id="IPR047089">
    <property type="entry name" value="Asp-tRNA-ligase_1_N"/>
</dbReference>
<dbReference type="InterPro" id="IPR002312">
    <property type="entry name" value="Asp/Asn-tRNA-synth_IIb"/>
</dbReference>
<dbReference type="InterPro" id="IPR047090">
    <property type="entry name" value="AspRS_core"/>
</dbReference>
<dbReference type="InterPro" id="IPR004115">
    <property type="entry name" value="GAD-like_sf"/>
</dbReference>
<dbReference type="InterPro" id="IPR029351">
    <property type="entry name" value="GAD_dom"/>
</dbReference>
<dbReference type="InterPro" id="IPR012340">
    <property type="entry name" value="NA-bd_OB-fold"/>
</dbReference>
<dbReference type="InterPro" id="IPR004365">
    <property type="entry name" value="NA-bd_OB_tRNA"/>
</dbReference>
<dbReference type="NCBIfam" id="TIGR00459">
    <property type="entry name" value="aspS_bact"/>
    <property type="match status" value="1"/>
</dbReference>
<dbReference type="NCBIfam" id="NF001750">
    <property type="entry name" value="PRK00476.1"/>
    <property type="match status" value="1"/>
</dbReference>
<dbReference type="PANTHER" id="PTHR22594:SF5">
    <property type="entry name" value="ASPARTATE--TRNA LIGASE, MITOCHONDRIAL"/>
    <property type="match status" value="1"/>
</dbReference>
<dbReference type="PANTHER" id="PTHR22594">
    <property type="entry name" value="ASPARTYL/LYSYL-TRNA SYNTHETASE"/>
    <property type="match status" value="1"/>
</dbReference>
<dbReference type="Pfam" id="PF02938">
    <property type="entry name" value="GAD"/>
    <property type="match status" value="1"/>
</dbReference>
<dbReference type="Pfam" id="PF00152">
    <property type="entry name" value="tRNA-synt_2"/>
    <property type="match status" value="1"/>
</dbReference>
<dbReference type="Pfam" id="PF01336">
    <property type="entry name" value="tRNA_anti-codon"/>
    <property type="match status" value="1"/>
</dbReference>
<dbReference type="PRINTS" id="PR01042">
    <property type="entry name" value="TRNASYNTHASP"/>
</dbReference>
<dbReference type="SUPFAM" id="SSF55681">
    <property type="entry name" value="Class II aaRS and biotin synthetases"/>
    <property type="match status" value="1"/>
</dbReference>
<dbReference type="SUPFAM" id="SSF55261">
    <property type="entry name" value="GAD domain-like"/>
    <property type="match status" value="1"/>
</dbReference>
<dbReference type="SUPFAM" id="SSF50249">
    <property type="entry name" value="Nucleic acid-binding proteins"/>
    <property type="match status" value="1"/>
</dbReference>
<dbReference type="PROSITE" id="PS50862">
    <property type="entry name" value="AA_TRNA_LIGASE_II"/>
    <property type="match status" value="1"/>
</dbReference>
<sequence length="593" mass="67833">MGEALRGLKRTIMCGESRENNIGEKVTVMGWVQRKRNLGGLIFVDLRDRTGIMQIVFGEEINKEAFEKSDNVKSEYCIAVTGEIVKRQSPNNDMETGAVELKGEDIKILSESETPPIYIKEGLDASENIRLKYRYLDLRRPDMQKIFMIRHKTCKVVRDFLDENGFLEMETPILTKSTPEGARDYLVPSRNYKGMFYALPQSPQIFKQLLMVSGYDKYFQITKCFRDEDLRANRQPEFTQIDMELSFVEEDDVIELNERLLAKVFKEVGGIDVKLPIERMPYKIAMEKYGSDKPDLRFGMEINDLTEAVKNSEFKVFKGAIEAGGSVRAIKAENCATMGRKQIDKLQDFVKTYKAKGLAWIAYKEDEIKSPIAKFLTEEEMKAILEKMDAKAGDLILIVADKNNVVFESLGALRLHIAKELDIINKNEFRFVWITEFPLLAYNEEEGRYQAEHHPFTAIMDEDIELLDTEPGKVRAKAYDIVLNGEELGGGSIRIHDSKLQEKMFSVLGFTKEKAWERFGFLLEAFKFGPPPHGGLAYGLDRMIMFLAGTENIKDVITFPKNQNAFCPLTEAPNVVDENQLEELGIKKIEKED</sequence>
<gene>
    <name evidence="1" type="primary">aspS</name>
    <name type="ordered locus">CLD_1486</name>
</gene>
<name>SYD_CLOBK</name>
<feature type="chain" id="PRO_1000090982" description="Aspartate--tRNA ligase">
    <location>
        <begin position="1"/>
        <end position="593"/>
    </location>
</feature>
<feature type="region of interest" description="Aspartate" evidence="1">
    <location>
        <begin position="204"/>
        <end position="207"/>
    </location>
</feature>
<feature type="binding site" evidence="1">
    <location>
        <position position="180"/>
    </location>
    <ligand>
        <name>L-aspartate</name>
        <dbReference type="ChEBI" id="CHEBI:29991"/>
    </ligand>
</feature>
<feature type="binding site" evidence="1">
    <location>
        <begin position="226"/>
        <end position="228"/>
    </location>
    <ligand>
        <name>ATP</name>
        <dbReference type="ChEBI" id="CHEBI:30616"/>
    </ligand>
</feature>
<feature type="binding site" evidence="1">
    <location>
        <position position="226"/>
    </location>
    <ligand>
        <name>L-aspartate</name>
        <dbReference type="ChEBI" id="CHEBI:29991"/>
    </ligand>
</feature>
<feature type="binding site" evidence="1">
    <location>
        <position position="235"/>
    </location>
    <ligand>
        <name>ATP</name>
        <dbReference type="ChEBI" id="CHEBI:30616"/>
    </ligand>
</feature>
<feature type="binding site" evidence="1">
    <location>
        <position position="453"/>
    </location>
    <ligand>
        <name>L-aspartate</name>
        <dbReference type="ChEBI" id="CHEBI:29991"/>
    </ligand>
</feature>
<feature type="binding site" evidence="1">
    <location>
        <position position="487"/>
    </location>
    <ligand>
        <name>ATP</name>
        <dbReference type="ChEBI" id="CHEBI:30616"/>
    </ligand>
</feature>
<feature type="binding site" evidence="1">
    <location>
        <position position="494"/>
    </location>
    <ligand>
        <name>L-aspartate</name>
        <dbReference type="ChEBI" id="CHEBI:29991"/>
    </ligand>
</feature>
<feature type="binding site" evidence="1">
    <location>
        <begin position="539"/>
        <end position="542"/>
    </location>
    <ligand>
        <name>ATP</name>
        <dbReference type="ChEBI" id="CHEBI:30616"/>
    </ligand>
</feature>
<accession>B1IMD7</accession>
<proteinExistence type="inferred from homology"/>
<protein>
    <recommendedName>
        <fullName evidence="1">Aspartate--tRNA ligase</fullName>
        <ecNumber evidence="1">6.1.1.12</ecNumber>
    </recommendedName>
    <alternativeName>
        <fullName evidence="1">Aspartyl-tRNA synthetase</fullName>
        <shortName evidence="1">AspRS</shortName>
    </alternativeName>
</protein>
<organism>
    <name type="scientific">Clostridium botulinum (strain Okra / Type B1)</name>
    <dbReference type="NCBI Taxonomy" id="498213"/>
    <lineage>
        <taxon>Bacteria</taxon>
        <taxon>Bacillati</taxon>
        <taxon>Bacillota</taxon>
        <taxon>Clostridia</taxon>
        <taxon>Eubacteriales</taxon>
        <taxon>Clostridiaceae</taxon>
        <taxon>Clostridium</taxon>
    </lineage>
</organism>
<keyword id="KW-0030">Aminoacyl-tRNA synthetase</keyword>
<keyword id="KW-0067">ATP-binding</keyword>
<keyword id="KW-0963">Cytoplasm</keyword>
<keyword id="KW-0436">Ligase</keyword>
<keyword id="KW-0547">Nucleotide-binding</keyword>
<keyword id="KW-0648">Protein biosynthesis</keyword>
<reference key="1">
    <citation type="journal article" date="2007" name="PLoS ONE">
        <title>Analysis of the neurotoxin complex genes in Clostridium botulinum A1-A4 and B1 strains: BoNT/A3, /Ba4 and /B1 clusters are located within plasmids.</title>
        <authorList>
            <person name="Smith T.J."/>
            <person name="Hill K.K."/>
            <person name="Foley B.T."/>
            <person name="Detter J.C."/>
            <person name="Munk A.C."/>
            <person name="Bruce D.C."/>
            <person name="Doggett N.A."/>
            <person name="Smith L.A."/>
            <person name="Marks J.D."/>
            <person name="Xie G."/>
            <person name="Brettin T.S."/>
        </authorList>
    </citation>
    <scope>NUCLEOTIDE SEQUENCE [LARGE SCALE GENOMIC DNA]</scope>
    <source>
        <strain>Okra / Type B1</strain>
    </source>
</reference>